<keyword id="KW-1003">Cell membrane</keyword>
<keyword id="KW-0328">Glycosyltransferase</keyword>
<keyword id="KW-0472">Membrane</keyword>
<keyword id="KW-1185">Reference proteome</keyword>
<keyword id="KW-0808">Transferase</keyword>
<keyword id="KW-0812">Transmembrane</keyword>
<keyword id="KW-1133">Transmembrane helix</keyword>
<feature type="chain" id="PRO_0000427211" description="Polyprenol-phosphate-mannose--protein mannosyltransferase">
    <location>
        <begin position="1"/>
        <end position="522"/>
    </location>
</feature>
<feature type="topological domain" description="Cytoplasmic" evidence="2">
    <location>
        <begin position="1"/>
        <end position="42"/>
    </location>
</feature>
<feature type="transmembrane region" description="Helical" evidence="2">
    <location>
        <begin position="43"/>
        <end position="63"/>
    </location>
</feature>
<feature type="topological domain" description="Extracellular" evidence="2">
    <location>
        <begin position="64"/>
        <end position="119"/>
    </location>
</feature>
<feature type="transmembrane region" description="Helical" evidence="2">
    <location>
        <begin position="120"/>
        <end position="140"/>
    </location>
</feature>
<feature type="topological domain" description="Cytoplasmic" evidence="2">
    <location>
        <begin position="141"/>
        <end position="149"/>
    </location>
</feature>
<feature type="transmembrane region" description="Helical" evidence="2">
    <location>
        <begin position="150"/>
        <end position="170"/>
    </location>
</feature>
<feature type="topological domain" description="Extracellular" evidence="2">
    <location>
        <position position="171"/>
    </location>
</feature>
<feature type="transmembrane region" description="Helical" evidence="2">
    <location>
        <begin position="172"/>
        <end position="192"/>
    </location>
</feature>
<feature type="topological domain" description="Cytoplasmic" evidence="2">
    <location>
        <begin position="193"/>
        <end position="239"/>
    </location>
</feature>
<feature type="transmembrane region" description="Helical" evidence="2">
    <location>
        <begin position="240"/>
        <end position="260"/>
    </location>
</feature>
<feature type="topological domain" description="Extracellular" evidence="2">
    <location>
        <begin position="261"/>
        <end position="281"/>
    </location>
</feature>
<feature type="transmembrane region" description="Helical" evidence="2">
    <location>
        <begin position="282"/>
        <end position="302"/>
    </location>
</feature>
<feature type="topological domain" description="Cytoplasmic" evidence="2">
    <location>
        <begin position="303"/>
        <end position="390"/>
    </location>
</feature>
<feature type="transmembrane region" description="Helical" evidence="2">
    <location>
        <begin position="391"/>
        <end position="411"/>
    </location>
</feature>
<feature type="topological domain" description="Extracellular" evidence="2">
    <location>
        <begin position="412"/>
        <end position="418"/>
    </location>
</feature>
<feature type="transmembrane region" description="Helical" evidence="2">
    <location>
        <begin position="419"/>
        <end position="439"/>
    </location>
</feature>
<feature type="topological domain" description="Cytoplasmic" evidence="2">
    <location>
        <begin position="440"/>
        <end position="442"/>
    </location>
</feature>
<feature type="transmembrane region" description="Helical" evidence="2">
    <location>
        <begin position="443"/>
        <end position="463"/>
    </location>
</feature>
<feature type="topological domain" description="Extracellular" evidence="2">
    <location>
        <begin position="464"/>
        <end position="478"/>
    </location>
</feature>
<feature type="transmembrane region" description="Helical" evidence="2">
    <location>
        <begin position="479"/>
        <end position="499"/>
    </location>
</feature>
<feature type="topological domain" description="Cytoplasmic" evidence="2">
    <location>
        <begin position="500"/>
        <end position="522"/>
    </location>
</feature>
<dbReference type="EC" id="2.4.1.-" evidence="1"/>
<dbReference type="EMBL" id="AE000516">
    <property type="protein sequence ID" value="AAK45281.1"/>
    <property type="status" value="ALT_INIT"/>
    <property type="molecule type" value="Genomic_DNA"/>
</dbReference>
<dbReference type="PIR" id="E70602">
    <property type="entry name" value="E70602"/>
</dbReference>
<dbReference type="SMR" id="P9WN04"/>
<dbReference type="CAZy" id="GT39">
    <property type="family name" value="Glycosyltransferase Family 39"/>
</dbReference>
<dbReference type="KEGG" id="mtc:MT1031"/>
<dbReference type="HOGENOM" id="CLU_021079_1_0_11"/>
<dbReference type="UniPathway" id="UPA00378"/>
<dbReference type="Proteomes" id="UP000001020">
    <property type="component" value="Chromosome"/>
</dbReference>
<dbReference type="GO" id="GO:0005886">
    <property type="term" value="C:plasma membrane"/>
    <property type="evidence" value="ECO:0007669"/>
    <property type="project" value="UniProtKB-SubCell"/>
</dbReference>
<dbReference type="GO" id="GO:0004169">
    <property type="term" value="F:dolichyl-phosphate-mannose-protein mannosyltransferase activity"/>
    <property type="evidence" value="ECO:0007669"/>
    <property type="project" value="UniProtKB-EC"/>
</dbReference>
<dbReference type="InterPro" id="IPR027005">
    <property type="entry name" value="GlyclTrfase_39-like"/>
</dbReference>
<dbReference type="InterPro" id="IPR003342">
    <property type="entry name" value="Glyco_trans_39/83"/>
</dbReference>
<dbReference type="InterPro" id="IPR032421">
    <property type="entry name" value="PMT_4TMC"/>
</dbReference>
<dbReference type="PANTHER" id="PTHR10050">
    <property type="entry name" value="DOLICHYL-PHOSPHATE-MANNOSE--PROTEIN MANNOSYLTRANSFERASE"/>
    <property type="match status" value="1"/>
</dbReference>
<dbReference type="PANTHER" id="PTHR10050:SF46">
    <property type="entry name" value="PROTEIN O-MANNOSYL-TRANSFERASE 2"/>
    <property type="match status" value="1"/>
</dbReference>
<dbReference type="Pfam" id="PF02366">
    <property type="entry name" value="PMT"/>
    <property type="match status" value="1"/>
</dbReference>
<dbReference type="Pfam" id="PF16192">
    <property type="entry name" value="PMT_4TMC"/>
    <property type="match status" value="1"/>
</dbReference>
<proteinExistence type="inferred from homology"/>
<name>PMT_MYCTO</name>
<comment type="function">
    <text evidence="1">Protein O-mannosyltransferase that catalyzes the transfer of a single mannose residue from a polyprenol phospho-mannosyl lipidic donor to the hydroxyl group of selected serine and threonine residues in acceptor proteins.</text>
</comment>
<comment type="pathway">
    <text evidence="1">Protein modification; protein glycosylation.</text>
</comment>
<comment type="subcellular location">
    <subcellularLocation>
        <location evidence="1">Cell membrane</location>
        <topology evidence="2">Multi-pass membrane protein</topology>
    </subcellularLocation>
</comment>
<comment type="similarity">
    <text evidence="3">Belongs to the glycosyltransferase 39 family.</text>
</comment>
<comment type="sequence caution" evidence="3">
    <conflict type="erroneous initiation">
        <sequence resource="EMBL-CDS" id="AAK45281"/>
    </conflict>
    <text>Truncated N-terminus.</text>
</comment>
<accession>P9WN04</accession>
<accession>L0T8C2</accession>
<accession>O05586</accession>
<protein>
    <recommendedName>
        <fullName evidence="1">Polyprenol-phosphate-mannose--protein mannosyltransferase</fullName>
        <ecNumber evidence="1">2.4.1.-</ecNumber>
    </recommendedName>
    <alternativeName>
        <fullName evidence="1">Protein O-mannosyltransferase</fullName>
        <shortName evidence="1">PMT</shortName>
    </alternativeName>
</protein>
<organism>
    <name type="scientific">Mycobacterium tuberculosis (strain CDC 1551 / Oshkosh)</name>
    <dbReference type="NCBI Taxonomy" id="83331"/>
    <lineage>
        <taxon>Bacteria</taxon>
        <taxon>Bacillati</taxon>
        <taxon>Actinomycetota</taxon>
        <taxon>Actinomycetes</taxon>
        <taxon>Mycobacteriales</taxon>
        <taxon>Mycobacteriaceae</taxon>
        <taxon>Mycobacterium</taxon>
        <taxon>Mycobacterium tuberculosis complex</taxon>
    </lineage>
</organism>
<sequence length="522" mass="57607">MTARPPESCVLAKDRPEEPVVPVVSPGPLVPVADFGPLDRLRGWIVTGLITLLATVTRFLNLGSLTDAGTPIFDEKHYAPQAWQVLNNHGVEDNPGYGLVVHPPVGKQLIAIGEAIFGYNGFGWRFTGALLGVVLVALVVRIVRRISRSTLVGAIAGVLLICDGVSFVTARTALLDGFLTFFVVAAFGALIVDRDQVRERMHIALLAGRSAATVWGPRVGVRWWRFGAGVLLGLACATKWSGVYFVLFFGAMALAFDVAARRQYQVQRPWLGTVRRDVLPSGYALGLIPFAVYLATYAPWFASETAIDRHAVGQAVGRNSVVPLPDAVRSLWHYTAKAFHFHAGLTNSAGNYHPWESKPWTWPMSLRPVLYAIDQQDVAGCGAQSCVKAEMLVGTPAMWWLAVPVLAYAGWRMFVRRDWRYAVVLVGYCAGWLPWFADIDRQMYFFYAATMAPFLVMGISLVLGDILYHPGQGSERRTLGLIVVCCYVALVVTNFAWLYPVLTGLPISQQTWNLEIWLPSWR</sequence>
<reference key="1">
    <citation type="journal article" date="2002" name="J. Bacteriol.">
        <title>Whole-genome comparison of Mycobacterium tuberculosis clinical and laboratory strains.</title>
        <authorList>
            <person name="Fleischmann R.D."/>
            <person name="Alland D."/>
            <person name="Eisen J.A."/>
            <person name="Carpenter L."/>
            <person name="White O."/>
            <person name="Peterson J.D."/>
            <person name="DeBoy R.T."/>
            <person name="Dodson R.J."/>
            <person name="Gwinn M.L."/>
            <person name="Haft D.H."/>
            <person name="Hickey E.K."/>
            <person name="Kolonay J.F."/>
            <person name="Nelson W.C."/>
            <person name="Umayam L.A."/>
            <person name="Ermolaeva M.D."/>
            <person name="Salzberg S.L."/>
            <person name="Delcher A."/>
            <person name="Utterback T.R."/>
            <person name="Weidman J.F."/>
            <person name="Khouri H.M."/>
            <person name="Gill J."/>
            <person name="Mikula A."/>
            <person name="Bishai W."/>
            <person name="Jacobs W.R. Jr."/>
            <person name="Venter J.C."/>
            <person name="Fraser C.M."/>
        </authorList>
    </citation>
    <scope>NUCLEOTIDE SEQUENCE [LARGE SCALE GENOMIC DNA]</scope>
    <source>
        <strain>CDC 1551 / Oshkosh</strain>
    </source>
</reference>
<evidence type="ECO:0000250" key="1">
    <source>
        <dbReference type="UniProtKB" id="P9WN05"/>
    </source>
</evidence>
<evidence type="ECO:0000255" key="2"/>
<evidence type="ECO:0000305" key="3"/>
<evidence type="ECO:0000312" key="4">
    <source>
        <dbReference type="EMBL" id="AAK45281.1"/>
    </source>
</evidence>
<gene>
    <name type="primary">pmt</name>
    <name evidence="4" type="ordered locus">MT1031</name>
</gene>